<comment type="function">
    <text evidence="1">Required for disulfide bond formation in some periplasmic proteins. Also acts as a disulfide oxidoreductase in cytochromes c biogenesis. The cysteines of apocytochromes c must be in the reduced state for covalent linkage between the two moieties to occur (By similarity).</text>
</comment>
<comment type="subcellular location">
    <subcellularLocation>
        <location evidence="5">Periplasm</location>
    </subcellularLocation>
</comment>
<comment type="similarity">
    <text evidence="5">Belongs to the thioredoxin family. DsbE subfamily.</text>
</comment>
<comment type="sequence caution" evidence="5">
    <conflict type="erroneous initiation">
        <sequence resource="EMBL-CDS" id="AAA26196"/>
    </conflict>
</comment>
<proteinExistence type="evidence at protein level"/>
<evidence type="ECO:0000250" key="1"/>
<evidence type="ECO:0000255" key="2"/>
<evidence type="ECO:0000255" key="3">
    <source>
        <dbReference type="PROSITE-ProRule" id="PRU00691"/>
    </source>
</evidence>
<evidence type="ECO:0000269" key="4">
    <source>
    </source>
</evidence>
<evidence type="ECO:0000305" key="5"/>
<evidence type="ECO:0007829" key="6">
    <source>
        <dbReference type="PDB" id="1KNG"/>
    </source>
</evidence>
<dbReference type="EMBL" id="M60874">
    <property type="protein sequence ID" value="AAA26196.1"/>
    <property type="status" value="ALT_INIT"/>
    <property type="molecule type" value="Genomic_DNA"/>
</dbReference>
<dbReference type="EMBL" id="BA000040">
    <property type="protein sequence ID" value="BAC45736.1"/>
    <property type="molecule type" value="Genomic_DNA"/>
</dbReference>
<dbReference type="PIR" id="D39741">
    <property type="entry name" value="D39741"/>
</dbReference>
<dbReference type="RefSeq" id="NP_767111.1">
    <property type="nucleotide sequence ID" value="NC_004463.1"/>
</dbReference>
<dbReference type="RefSeq" id="WP_011083302.1">
    <property type="nucleotide sequence ID" value="NC_004463.1"/>
</dbReference>
<dbReference type="PDB" id="1KNG">
    <property type="method" value="X-ray"/>
    <property type="resolution" value="1.14 A"/>
    <property type="chains" value="A=39-194"/>
</dbReference>
<dbReference type="PDBsum" id="1KNG"/>
<dbReference type="SMR" id="P30960"/>
<dbReference type="FunCoup" id="P30960">
    <property type="interactions" value="300"/>
</dbReference>
<dbReference type="STRING" id="224911.AAV28_41605"/>
<dbReference type="EnsemblBacteria" id="BAC45736">
    <property type="protein sequence ID" value="BAC45736"/>
    <property type="gene ID" value="BAC45736"/>
</dbReference>
<dbReference type="GeneID" id="46495617"/>
<dbReference type="KEGG" id="bja:blr0471"/>
<dbReference type="PATRIC" id="fig|224911.44.peg.9004"/>
<dbReference type="eggNOG" id="COG0526">
    <property type="taxonomic scope" value="Bacteria"/>
</dbReference>
<dbReference type="HOGENOM" id="CLU_042529_19_0_5"/>
<dbReference type="InParanoid" id="P30960"/>
<dbReference type="OrthoDB" id="9799347at2"/>
<dbReference type="PhylomeDB" id="P30960"/>
<dbReference type="EvolutionaryTrace" id="P30960"/>
<dbReference type="Proteomes" id="UP000002526">
    <property type="component" value="Chromosome"/>
</dbReference>
<dbReference type="GO" id="GO:0030288">
    <property type="term" value="C:outer membrane-bounded periplasmic space"/>
    <property type="evidence" value="ECO:0007669"/>
    <property type="project" value="InterPro"/>
</dbReference>
<dbReference type="GO" id="GO:0015036">
    <property type="term" value="F:disulfide oxidoreductase activity"/>
    <property type="evidence" value="ECO:0007669"/>
    <property type="project" value="InterPro"/>
</dbReference>
<dbReference type="GO" id="GO:0017004">
    <property type="term" value="P:cytochrome complex assembly"/>
    <property type="evidence" value="ECO:0007669"/>
    <property type="project" value="UniProtKB-KW"/>
</dbReference>
<dbReference type="CDD" id="cd03010">
    <property type="entry name" value="TlpA_like_DsbE"/>
    <property type="match status" value="1"/>
</dbReference>
<dbReference type="Gene3D" id="3.40.30.10">
    <property type="entry name" value="Glutaredoxin"/>
    <property type="match status" value="1"/>
</dbReference>
<dbReference type="InterPro" id="IPR004799">
    <property type="entry name" value="Periplasmic_diS_OxRdtase_DsbE"/>
</dbReference>
<dbReference type="InterPro" id="IPR013740">
    <property type="entry name" value="Redoxin"/>
</dbReference>
<dbReference type="InterPro" id="IPR036249">
    <property type="entry name" value="Thioredoxin-like_sf"/>
</dbReference>
<dbReference type="InterPro" id="IPR017937">
    <property type="entry name" value="Thioredoxin_CS"/>
</dbReference>
<dbReference type="InterPro" id="IPR013766">
    <property type="entry name" value="Thioredoxin_domain"/>
</dbReference>
<dbReference type="InterPro" id="IPR050553">
    <property type="entry name" value="Thioredoxin_ResA/DsbE_sf"/>
</dbReference>
<dbReference type="NCBIfam" id="TIGR00385">
    <property type="entry name" value="dsbE"/>
    <property type="match status" value="1"/>
</dbReference>
<dbReference type="PANTHER" id="PTHR42852">
    <property type="entry name" value="THIOL:DISULFIDE INTERCHANGE PROTEIN DSBE"/>
    <property type="match status" value="1"/>
</dbReference>
<dbReference type="PANTHER" id="PTHR42852:SF6">
    <property type="entry name" value="THIOL:DISULFIDE INTERCHANGE PROTEIN DSBE"/>
    <property type="match status" value="1"/>
</dbReference>
<dbReference type="Pfam" id="PF08534">
    <property type="entry name" value="Redoxin"/>
    <property type="match status" value="1"/>
</dbReference>
<dbReference type="SUPFAM" id="SSF52833">
    <property type="entry name" value="Thioredoxin-like"/>
    <property type="match status" value="1"/>
</dbReference>
<dbReference type="PROSITE" id="PS00194">
    <property type="entry name" value="THIOREDOXIN_1"/>
    <property type="match status" value="1"/>
</dbReference>
<dbReference type="PROSITE" id="PS51352">
    <property type="entry name" value="THIOREDOXIN_2"/>
    <property type="match status" value="1"/>
</dbReference>
<accession>P30960</accession>
<sequence length="194" mass="21126">MSEQSTSANPQRRTFLMVLPLIAFIGLALLFWFRLGSGDPSRIPSALIGRPAPQTALPPLEGLQADNVQVPGLDPAAFKGKVSLVNVWASWCVPCHDEAPLLTELGKDKRFQLVGINYKDAADNARRFLGRYGNPFGRVGVDANGRASIEWGVYGVPETFVVGREGTIVYKLVGPITPDNLRSVLLPQMEKALK</sequence>
<protein>
    <recommendedName>
        <fullName>Thiol:disulfide interchange protein CycY</fullName>
    </recommendedName>
    <alternativeName>
        <fullName>Cytochrome c biogenesis protein CycY</fullName>
    </alternativeName>
</protein>
<organism>
    <name type="scientific">Bradyrhizobium diazoefficiens (strain JCM 10833 / BCRC 13528 / IAM 13628 / NBRC 14792 / USDA 110)</name>
    <dbReference type="NCBI Taxonomy" id="224911"/>
    <lineage>
        <taxon>Bacteria</taxon>
        <taxon>Pseudomonadati</taxon>
        <taxon>Pseudomonadota</taxon>
        <taxon>Alphaproteobacteria</taxon>
        <taxon>Hyphomicrobiales</taxon>
        <taxon>Nitrobacteraceae</taxon>
        <taxon>Bradyrhizobium</taxon>
    </lineage>
</organism>
<keyword id="KW-0002">3D-structure</keyword>
<keyword id="KW-0201">Cytochrome c-type biogenesis</keyword>
<keyword id="KW-1015">Disulfide bond</keyword>
<keyword id="KW-0574">Periplasm</keyword>
<keyword id="KW-0676">Redox-active center</keyword>
<keyword id="KW-1185">Reference proteome</keyword>
<keyword id="KW-0732">Signal</keyword>
<reference key="1">
    <citation type="journal article" date="1991" name="J. Biol. Chem.">
        <title>Discovery and sequence analysis of bacterial genes involved in the biogenesis of c-type cytochromes.</title>
        <authorList>
            <person name="Ramseier T.M."/>
            <person name="Winteler H.V."/>
            <person name="Hennecke H."/>
        </authorList>
    </citation>
    <scope>NUCLEOTIDE SEQUENCE [GENOMIC DNA]</scope>
    <source>
        <strain>USDA 110RIF15</strain>
    </source>
</reference>
<reference key="2">
    <citation type="journal article" date="2002" name="DNA Res.">
        <title>Complete genomic sequence of nitrogen-fixing symbiotic bacterium Bradyrhizobium japonicum USDA110.</title>
        <authorList>
            <person name="Kaneko T."/>
            <person name="Nakamura Y."/>
            <person name="Sato S."/>
            <person name="Minamisawa K."/>
            <person name="Uchiumi T."/>
            <person name="Sasamoto S."/>
            <person name="Watanabe A."/>
            <person name="Idesawa K."/>
            <person name="Iriguchi M."/>
            <person name="Kawashima K."/>
            <person name="Kohara M."/>
            <person name="Matsumoto M."/>
            <person name="Shimpo S."/>
            <person name="Tsuruoka H."/>
            <person name="Wada T."/>
            <person name="Yamada M."/>
            <person name="Tabata S."/>
        </authorList>
    </citation>
    <scope>NUCLEOTIDE SEQUENCE [LARGE SCALE GENOMIC DNA]</scope>
    <source>
        <strain>JCM 10833 / BCRC 13528 / IAM 13628 / NBRC 14792 / USDA 110</strain>
    </source>
</reference>
<reference key="3">
    <citation type="journal article" date="2002" name="Structure">
        <title>Structure of CcmG/DsbE at 1.14 A resolution: high-fidelity reducing activity in an indiscriminately oxidizing environment.</title>
        <authorList>
            <person name="Edeling M.A."/>
            <person name="Guddat L.W."/>
            <person name="Fabianek R.A."/>
            <person name="Thoeny-Meyer L."/>
            <person name="Martin J.L."/>
        </authorList>
    </citation>
    <scope>X-RAY CRYSTALLOGRAPHY (1.14 ANGSTROMS) OF 39-194</scope>
    <scope>DISULFIDE BOND</scope>
</reference>
<gene>
    <name type="primary">cycY</name>
    <name type="synonym">ccmG</name>
    <name type="ordered locus">blr0471</name>
</gene>
<feature type="signal peptide" evidence="2">
    <location>
        <begin position="1"/>
        <end position="37"/>
    </location>
</feature>
<feature type="chain" id="PRO_0000034287" description="Thiol:disulfide interchange protein CycY">
    <location>
        <begin position="38"/>
        <end position="194"/>
    </location>
</feature>
<feature type="domain" description="Thioredoxin" evidence="3">
    <location>
        <begin position="46"/>
        <end position="190"/>
    </location>
</feature>
<feature type="disulfide bond" description="Redox-active" evidence="3 4">
    <location>
        <begin position="92"/>
        <end position="95"/>
    </location>
</feature>
<feature type="helix" evidence="6">
    <location>
        <begin position="75"/>
        <end position="78"/>
    </location>
</feature>
<feature type="strand" evidence="6">
    <location>
        <begin position="83"/>
        <end position="88"/>
    </location>
</feature>
<feature type="helix" evidence="6">
    <location>
        <begin position="93"/>
        <end position="105"/>
    </location>
</feature>
<feature type="strand" evidence="6">
    <location>
        <begin position="111"/>
        <end position="119"/>
    </location>
</feature>
<feature type="helix" evidence="6">
    <location>
        <begin position="122"/>
        <end position="132"/>
    </location>
</feature>
<feature type="strand" evidence="6">
    <location>
        <begin position="137"/>
        <end position="142"/>
    </location>
</feature>
<feature type="helix" evidence="6">
    <location>
        <begin position="146"/>
        <end position="150"/>
    </location>
</feature>
<feature type="strand" evidence="6">
    <location>
        <begin position="158"/>
        <end position="162"/>
    </location>
</feature>
<feature type="strand" evidence="6">
    <location>
        <begin position="166"/>
        <end position="174"/>
    </location>
</feature>
<feature type="helix" evidence="6">
    <location>
        <begin position="178"/>
        <end position="183"/>
    </location>
</feature>
<feature type="helix" evidence="6">
    <location>
        <begin position="185"/>
        <end position="192"/>
    </location>
</feature>
<name>CYCY_BRADU</name>